<comment type="function">
    <text evidence="1 5 6 7">Visual pigments are the light-absorbing molecules that mediate vision. They consist of an apoprotein, opsin, covalently linked to cis-retinal (By similarity). Required for the maintenance of cone outer segment organization in the ventral retina, but not essential for the maintenance of functioning cone photoreceptors (PubMed:21219924, PubMed:25416279). Involved in ensuring correct abundance and localization of retinal membrane proteins (PubMed:25416279). May increase spectral sensitivity in dim light (PubMed:11055434).</text>
</comment>
<comment type="subcellular location">
    <subcellularLocation>
        <location evidence="1">Cell membrane</location>
        <topology evidence="2">Multi-pass membrane protein</topology>
    </subcellularLocation>
    <subcellularLocation>
        <location evidence="6">Photoreceptor inner segment</location>
    </subcellularLocation>
    <subcellularLocation>
        <location evidence="6">Cell projection</location>
        <location evidence="6">Cilium</location>
        <location evidence="6">Photoreceptor outer segment</location>
    </subcellularLocation>
    <subcellularLocation>
        <location evidence="1">Cytoplasm</location>
        <location evidence="1">Perinuclear region</location>
    </subcellularLocation>
</comment>
<comment type="tissue specificity">
    <text evidence="5 6 7">Expressed in the inner and outer segments of cone photoreceptor cells in the retina (at protein level).</text>
</comment>
<comment type="PTM">
    <text>Phosphorylated on some or all of the serine and threonine residues present in the C-terminal region.</text>
</comment>
<comment type="disruption phenotype">
    <text evidence="6 7">Knockout mice are viable with normal gross morphology (PubMed:21219924). Cone photoreceptors are normal and provide a normal flash response, however cone cells in the ventral retina have thin or undetectable outer segments that exhibit mild to severe disordered organization (PubMed:21219924, PubMed:25416279). Cone cells show increased sensitivity to mid-wavelength light, potentially as result of increased protein Opn1mw abundance (PubMed:21219924). Lrat and Opn1sw double knockout mice show no change in cone cell viability in the central and ventral retina, however show shorter and swollen outer and inner segments at twelve months of age (PubMed:25416279). Double knockout of Lrat and Opn1sw results in a reduction in the slow degeneration of dorsal cone photoreceptors compared to Lrat knockout mice (PubMed:25416279). Lrat and Opn1sw double knockout mice show a reduced abundance of transmembrane and peripheral membrane-associated proteins in cone inner and outer segments (PubMed:25416279).</text>
</comment>
<comment type="similarity">
    <text evidence="3">Belongs to the G-protein coupled receptor 1 family. Opsin subfamily.</text>
</comment>
<keyword id="KW-1003">Cell membrane</keyword>
<keyword id="KW-0966">Cell projection</keyword>
<keyword id="KW-0157">Chromophore</keyword>
<keyword id="KW-0963">Cytoplasm</keyword>
<keyword id="KW-1015">Disulfide bond</keyword>
<keyword id="KW-0297">G-protein coupled receptor</keyword>
<keyword id="KW-0325">Glycoprotein</keyword>
<keyword id="KW-0472">Membrane</keyword>
<keyword id="KW-0597">Phosphoprotein</keyword>
<keyword id="KW-0600">Photoreceptor protein</keyword>
<keyword id="KW-0675">Receptor</keyword>
<keyword id="KW-1185">Reference proteome</keyword>
<keyword id="KW-0681">Retinal protein</keyword>
<keyword id="KW-0716">Sensory transduction</keyword>
<keyword id="KW-0807">Transducer</keyword>
<keyword id="KW-0812">Transmembrane</keyword>
<keyword id="KW-1133">Transmembrane helix</keyword>
<keyword id="KW-0844">Vision</keyword>
<gene>
    <name type="primary">Opn1sw</name>
    <name type="synonym">Bcp</name>
</gene>
<accession>P51491</accession>
<accession>Q548Z8</accession>
<proteinExistence type="evidence at protein level"/>
<sequence>MSGEDDFYLFQNISSVGPWDGPQYHLAPVWAFRLQAAFMGFVFFVGTPLNAIVLVATLHYKKLRQPLNYILVNVSLGGFLFCIFSVFTVFIASCHGYFLFGRHVCALEAFLGSVAGLVTGWSLAFLAFERYVVICKPFGSIRFNSKHALMVVLATWIIGIGVSIPPFFGWSRFIPEGLQCSCGPDWYTVGTKYRSEYYTWFLFIFCFIIPLSLICFSYSQLLRTLRAVAAQQQESATTQKAEREVSHMVVVMVGSFCLCYVPYAALAMYMVNNRNHGLDLRLVTIPAFFSKSSCVYNPIIYCFMNKQFRACILEMVCRKPMADESDVSGSQKTEVSTVSSSKVGPH</sequence>
<dbReference type="EMBL" id="U49720">
    <property type="protein sequence ID" value="AAA92458.1"/>
    <property type="molecule type" value="mRNA"/>
</dbReference>
<dbReference type="EMBL" id="U92562">
    <property type="protein sequence ID" value="AAB53320.1"/>
    <property type="molecule type" value="Genomic_DNA"/>
</dbReference>
<dbReference type="EMBL" id="U92558">
    <property type="protein sequence ID" value="AAB53320.1"/>
    <property type="status" value="JOINED"/>
    <property type="molecule type" value="Genomic_DNA"/>
</dbReference>
<dbReference type="EMBL" id="U92559">
    <property type="protein sequence ID" value="AAB53320.1"/>
    <property type="status" value="JOINED"/>
    <property type="molecule type" value="Genomic_DNA"/>
</dbReference>
<dbReference type="EMBL" id="U92560">
    <property type="protein sequence ID" value="AAB53320.1"/>
    <property type="status" value="JOINED"/>
    <property type="molecule type" value="Genomic_DNA"/>
</dbReference>
<dbReference type="EMBL" id="U92561">
    <property type="protein sequence ID" value="AAB53320.1"/>
    <property type="status" value="JOINED"/>
    <property type="molecule type" value="Genomic_DNA"/>
</dbReference>
<dbReference type="EMBL" id="AF190670">
    <property type="protein sequence ID" value="AAG17989.1"/>
    <property type="molecule type" value="mRNA"/>
</dbReference>
<dbReference type="EMBL" id="AF190671">
    <property type="protein sequence ID" value="AAG17990.1"/>
    <property type="molecule type" value="Genomic_DNA"/>
</dbReference>
<dbReference type="EMBL" id="BC026021">
    <property type="protein sequence ID" value="AAH26021.1"/>
    <property type="molecule type" value="mRNA"/>
</dbReference>
<dbReference type="EMBL" id="BC058267">
    <property type="protein sequence ID" value="AAH58267.1"/>
    <property type="molecule type" value="mRNA"/>
</dbReference>
<dbReference type="CCDS" id="CCDS19959.1"/>
<dbReference type="PIR" id="B54679">
    <property type="entry name" value="B54679"/>
</dbReference>
<dbReference type="RefSeq" id="NP_031564.1">
    <property type="nucleotide sequence ID" value="NM_007538.3"/>
</dbReference>
<dbReference type="SMR" id="P51491"/>
<dbReference type="BioGRID" id="198330">
    <property type="interactions" value="1"/>
</dbReference>
<dbReference type="FunCoup" id="P51491">
    <property type="interactions" value="184"/>
</dbReference>
<dbReference type="STRING" id="10090.ENSMUSP00000079289"/>
<dbReference type="GlyCosmos" id="P51491">
    <property type="glycosylation" value="1 site, No reported glycans"/>
</dbReference>
<dbReference type="GlyGen" id="P51491">
    <property type="glycosylation" value="1 site"/>
</dbReference>
<dbReference type="PhosphoSitePlus" id="P51491"/>
<dbReference type="PaxDb" id="10090-ENSMUSP00000079289"/>
<dbReference type="ProteomicsDB" id="294393"/>
<dbReference type="Antibodypedia" id="31899">
    <property type="antibodies" value="83 antibodies from 19 providers"/>
</dbReference>
<dbReference type="DNASU" id="12057"/>
<dbReference type="Ensembl" id="ENSMUST00000080428.13">
    <property type="protein sequence ID" value="ENSMUSP00000079289.7"/>
    <property type="gene ID" value="ENSMUSG00000058831.14"/>
</dbReference>
<dbReference type="GeneID" id="12057"/>
<dbReference type="KEGG" id="mmu:12057"/>
<dbReference type="UCSC" id="uc009bdi.2">
    <property type="organism name" value="mouse"/>
</dbReference>
<dbReference type="AGR" id="MGI:99438"/>
<dbReference type="CTD" id="611"/>
<dbReference type="MGI" id="MGI:99438">
    <property type="gene designation" value="Opn1sw"/>
</dbReference>
<dbReference type="VEuPathDB" id="HostDB:ENSMUSG00000058831"/>
<dbReference type="eggNOG" id="KOG3656">
    <property type="taxonomic scope" value="Eukaryota"/>
</dbReference>
<dbReference type="GeneTree" id="ENSGT01030000234549"/>
<dbReference type="HOGENOM" id="CLU_009579_3_0_1"/>
<dbReference type="InParanoid" id="P51491"/>
<dbReference type="OMA" id="QTAFMGF"/>
<dbReference type="OrthoDB" id="6142583at2759"/>
<dbReference type="PhylomeDB" id="P51491"/>
<dbReference type="TreeFam" id="TF324998"/>
<dbReference type="Reactome" id="R-MMU-2187335">
    <property type="pathway name" value="The retinoid cycle in cones (daylight vision)"/>
</dbReference>
<dbReference type="Reactome" id="R-MMU-418594">
    <property type="pathway name" value="G alpha (i) signalling events"/>
</dbReference>
<dbReference type="Reactome" id="R-MMU-419771">
    <property type="pathway name" value="Opsins"/>
</dbReference>
<dbReference type="BioGRID-ORCS" id="12057">
    <property type="hits" value="2 hits in 78 CRISPR screens"/>
</dbReference>
<dbReference type="ChiTaRS" id="Opn1sw">
    <property type="organism name" value="mouse"/>
</dbReference>
<dbReference type="PRO" id="PR:P51491"/>
<dbReference type="Proteomes" id="UP000000589">
    <property type="component" value="Chromosome 6"/>
</dbReference>
<dbReference type="RNAct" id="P51491">
    <property type="molecule type" value="protein"/>
</dbReference>
<dbReference type="Bgee" id="ENSMUSG00000058831">
    <property type="expression patterns" value="Expressed in retinal neural layer and 35 other cell types or tissues"/>
</dbReference>
<dbReference type="ExpressionAtlas" id="P51491">
    <property type="expression patterns" value="baseline and differential"/>
</dbReference>
<dbReference type="GO" id="GO:0120199">
    <property type="term" value="C:cone photoreceptor outer segment"/>
    <property type="evidence" value="ECO:0000314"/>
    <property type="project" value="MGI"/>
</dbReference>
<dbReference type="GO" id="GO:0048471">
    <property type="term" value="C:perinuclear region of cytoplasm"/>
    <property type="evidence" value="ECO:0000250"/>
    <property type="project" value="UniProtKB"/>
</dbReference>
<dbReference type="GO" id="GO:0001917">
    <property type="term" value="C:photoreceptor inner segment"/>
    <property type="evidence" value="ECO:0007669"/>
    <property type="project" value="UniProtKB-SubCell"/>
</dbReference>
<dbReference type="GO" id="GO:0001750">
    <property type="term" value="C:photoreceptor outer segment"/>
    <property type="evidence" value="ECO:0000314"/>
    <property type="project" value="MGI"/>
</dbReference>
<dbReference type="GO" id="GO:0005886">
    <property type="term" value="C:plasma membrane"/>
    <property type="evidence" value="ECO:0000250"/>
    <property type="project" value="UniProtKB"/>
</dbReference>
<dbReference type="GO" id="GO:0004930">
    <property type="term" value="F:G protein-coupled receptor activity"/>
    <property type="evidence" value="ECO:0007669"/>
    <property type="project" value="UniProtKB-KW"/>
</dbReference>
<dbReference type="GO" id="GO:0009881">
    <property type="term" value="F:photoreceptor activity"/>
    <property type="evidence" value="ECO:0007669"/>
    <property type="project" value="UniProtKB-KW"/>
</dbReference>
<dbReference type="GO" id="GO:0071492">
    <property type="term" value="P:cellular response to UV-A"/>
    <property type="evidence" value="ECO:0000250"/>
    <property type="project" value="UniProtKB"/>
</dbReference>
<dbReference type="GO" id="GO:0007602">
    <property type="term" value="P:phototransduction"/>
    <property type="evidence" value="ECO:0007669"/>
    <property type="project" value="UniProtKB-KW"/>
</dbReference>
<dbReference type="GO" id="GO:0007601">
    <property type="term" value="P:visual perception"/>
    <property type="evidence" value="ECO:0007669"/>
    <property type="project" value="UniProtKB-KW"/>
</dbReference>
<dbReference type="CDD" id="cd15076">
    <property type="entry name" value="7tmA_SWS1_opsin"/>
    <property type="match status" value="1"/>
</dbReference>
<dbReference type="FunFam" id="1.20.1070.10:FF:000018">
    <property type="entry name" value="Rhodopsin"/>
    <property type="match status" value="1"/>
</dbReference>
<dbReference type="Gene3D" id="1.20.1070.10">
    <property type="entry name" value="Rhodopsin 7-helix transmembrane proteins"/>
    <property type="match status" value="1"/>
</dbReference>
<dbReference type="InterPro" id="IPR050125">
    <property type="entry name" value="GPCR_opsins"/>
</dbReference>
<dbReference type="InterPro" id="IPR000276">
    <property type="entry name" value="GPCR_Rhodpsn"/>
</dbReference>
<dbReference type="InterPro" id="IPR017452">
    <property type="entry name" value="GPCR_Rhodpsn_7TM"/>
</dbReference>
<dbReference type="InterPro" id="IPR001760">
    <property type="entry name" value="Opsin"/>
</dbReference>
<dbReference type="InterPro" id="IPR001521">
    <property type="entry name" value="Opsin_blue"/>
</dbReference>
<dbReference type="InterPro" id="IPR027430">
    <property type="entry name" value="Retinal_BS"/>
</dbReference>
<dbReference type="PANTHER" id="PTHR24240">
    <property type="entry name" value="OPSIN"/>
    <property type="match status" value="1"/>
</dbReference>
<dbReference type="Pfam" id="PF00001">
    <property type="entry name" value="7tm_1"/>
    <property type="match status" value="1"/>
</dbReference>
<dbReference type="PRINTS" id="PR00237">
    <property type="entry name" value="GPCRRHODOPSN"/>
</dbReference>
<dbReference type="PRINTS" id="PR00238">
    <property type="entry name" value="OPSIN"/>
</dbReference>
<dbReference type="PRINTS" id="PR00574">
    <property type="entry name" value="OPSINBLUE"/>
</dbReference>
<dbReference type="SUPFAM" id="SSF81321">
    <property type="entry name" value="Family A G protein-coupled receptor-like"/>
    <property type="match status" value="1"/>
</dbReference>
<dbReference type="PROSITE" id="PS00237">
    <property type="entry name" value="G_PROTEIN_RECEP_F1_1"/>
    <property type="match status" value="1"/>
</dbReference>
<dbReference type="PROSITE" id="PS50262">
    <property type="entry name" value="G_PROTEIN_RECEP_F1_2"/>
    <property type="match status" value="1"/>
</dbReference>
<dbReference type="PROSITE" id="PS00238">
    <property type="entry name" value="OPSIN"/>
    <property type="match status" value="1"/>
</dbReference>
<feature type="chain" id="PRO_0000197766" description="Short-wave-sensitive opsin 1">
    <location>
        <begin position="1"/>
        <end position="346"/>
    </location>
</feature>
<feature type="topological domain" description="Extracellular">
    <location>
        <begin position="1"/>
        <end position="31"/>
    </location>
</feature>
<feature type="transmembrane region" description="Helical; Name=1" evidence="2">
    <location>
        <begin position="32"/>
        <end position="56"/>
    </location>
</feature>
<feature type="topological domain" description="Cytoplasmic">
    <location>
        <begin position="57"/>
        <end position="68"/>
    </location>
</feature>
<feature type="transmembrane region" description="Helical; Name=2" evidence="2">
    <location>
        <begin position="69"/>
        <end position="94"/>
    </location>
</feature>
<feature type="topological domain" description="Extracellular">
    <location>
        <begin position="95"/>
        <end position="108"/>
    </location>
</feature>
<feature type="transmembrane region" description="Helical; Name=3" evidence="2">
    <location>
        <begin position="109"/>
        <end position="128"/>
    </location>
</feature>
<feature type="topological domain" description="Cytoplasmic">
    <location>
        <begin position="129"/>
        <end position="147"/>
    </location>
</feature>
<feature type="transmembrane region" description="Helical; Name=4" evidence="2">
    <location>
        <begin position="148"/>
        <end position="171"/>
    </location>
</feature>
<feature type="topological domain" description="Extracellular">
    <location>
        <begin position="172"/>
        <end position="197"/>
    </location>
</feature>
<feature type="transmembrane region" description="Helical; Name=5" evidence="2">
    <location>
        <begin position="198"/>
        <end position="225"/>
    </location>
</feature>
<feature type="topological domain" description="Cytoplasmic">
    <location>
        <begin position="226"/>
        <end position="247"/>
    </location>
</feature>
<feature type="transmembrane region" description="Helical; Name=6" evidence="2">
    <location>
        <begin position="248"/>
        <end position="271"/>
    </location>
</feature>
<feature type="topological domain" description="Extracellular">
    <location>
        <begin position="272"/>
        <end position="279"/>
    </location>
</feature>
<feature type="transmembrane region" description="Helical; Name=7" evidence="2">
    <location>
        <begin position="280"/>
        <end position="304"/>
    </location>
</feature>
<feature type="topological domain" description="Cytoplasmic">
    <location>
        <begin position="305"/>
        <end position="346"/>
    </location>
</feature>
<feature type="region of interest" description="Disordered" evidence="4">
    <location>
        <begin position="324"/>
        <end position="346"/>
    </location>
</feature>
<feature type="compositionally biased region" description="Low complexity" evidence="4">
    <location>
        <begin position="330"/>
        <end position="346"/>
    </location>
</feature>
<feature type="modified residue" description="N6-(retinylidene)lysine">
    <location>
        <position position="291"/>
    </location>
</feature>
<feature type="glycosylation site" description="N-linked (GlcNAc...) asparagine" evidence="8">
    <location>
        <position position="12"/>
    </location>
</feature>
<feature type="disulfide bond" evidence="3">
    <location>
        <begin position="105"/>
        <end position="182"/>
    </location>
</feature>
<reference key="1">
    <citation type="journal article" date="1994" name="Genomics">
        <title>Murine and bovine blue cone pigment genes: cloning and characterization of two new members of the S family of visual pigments.</title>
        <authorList>
            <person name="Chiu M.I."/>
            <person name="Zack D.J."/>
            <person name="Wang Y."/>
            <person name="Nathans J."/>
        </authorList>
    </citation>
    <scope>NUCLEOTIDE SEQUENCE [GENOMIC DNA / MRNA]</scope>
    <source>
        <tissue>Retina</tissue>
    </source>
</reference>
<reference key="2">
    <citation type="journal article" date="2000" name="Neuron">
        <title>The murine cone photoreceptor: a single cone type expresses both S and M opsins with retinal spatial patterning.</title>
        <authorList>
            <person name="Applebury M.L."/>
            <person name="Antoch M.P."/>
            <person name="Baxter L.C."/>
            <person name="Chun L.Y."/>
            <person name="Falk J.D."/>
            <person name="Farhangfar F."/>
            <person name="Kage K."/>
            <person name="Krzystolik M.G."/>
            <person name="Lyass L.A."/>
            <person name="Robbins J.T."/>
        </authorList>
    </citation>
    <scope>NUCLEOTIDE SEQUENCE [GENOMIC DNA / MRNA]</scope>
    <scope>FUNCTION</scope>
    <scope>TISSUE SPECIFICITY</scope>
    <source>
        <strain>BALB/cJ</strain>
        <strain>C57BL/10</strain>
    </source>
</reference>
<reference key="3">
    <citation type="journal article" date="2004" name="Genome Res.">
        <title>The status, quality, and expansion of the NIH full-length cDNA project: the Mammalian Gene Collection (MGC).</title>
        <authorList>
            <consortium name="The MGC Project Team"/>
        </authorList>
    </citation>
    <scope>NUCLEOTIDE SEQUENCE [LARGE SCALE MRNA]</scope>
    <source>
        <strain>C57BL/6J</strain>
        <tissue>Retina</tissue>
    </source>
</reference>
<reference key="4">
    <citation type="journal article" date="2011" name="Vision Res.">
        <title>A mouse M-opsin monochromat: retinal cone photoreceptors have increased M-opsin expression when S-opsin is knocked out.</title>
        <authorList>
            <person name="Daniele L.L."/>
            <person name="Insinna C."/>
            <person name="Chance R."/>
            <person name="Wang J."/>
            <person name="Nikonov S.S."/>
            <person name="Pugh E.N. Jr."/>
        </authorList>
    </citation>
    <scope>FUNCTION</scope>
    <scope>SUBCELLULAR LOCATION</scope>
    <scope>TISSUE SPECIFICITY</scope>
    <scope>DISRUPTION PHENOTYPE</scope>
</reference>
<reference key="5">
    <citation type="journal article" date="2015" name="Hum. Mol. Genet.">
        <title>Genetic deletion of S-opsin prevents rapid cone degeneration in a mouse model of Leber congenital amaurosis.</title>
        <authorList>
            <person name="Zhang T."/>
            <person name="Enemchukwu N.O."/>
            <person name="Jones A."/>
            <person name="Wang S."/>
            <person name="Dennis E."/>
            <person name="Watt C.B."/>
            <person name="Pugh E.N. Jr."/>
            <person name="Fu Y."/>
        </authorList>
    </citation>
    <scope>FUNCTION</scope>
    <scope>TISSUE SPECIFICITY</scope>
    <scope>DISRUPTION PHENOTYPE</scope>
</reference>
<organism>
    <name type="scientific">Mus musculus</name>
    <name type="common">Mouse</name>
    <dbReference type="NCBI Taxonomy" id="10090"/>
    <lineage>
        <taxon>Eukaryota</taxon>
        <taxon>Metazoa</taxon>
        <taxon>Chordata</taxon>
        <taxon>Craniata</taxon>
        <taxon>Vertebrata</taxon>
        <taxon>Euteleostomi</taxon>
        <taxon>Mammalia</taxon>
        <taxon>Eutheria</taxon>
        <taxon>Euarchontoglires</taxon>
        <taxon>Glires</taxon>
        <taxon>Rodentia</taxon>
        <taxon>Myomorpha</taxon>
        <taxon>Muroidea</taxon>
        <taxon>Muridae</taxon>
        <taxon>Murinae</taxon>
        <taxon>Mus</taxon>
        <taxon>Mus</taxon>
    </lineage>
</organism>
<evidence type="ECO:0000250" key="1">
    <source>
        <dbReference type="UniProtKB" id="P03999"/>
    </source>
</evidence>
<evidence type="ECO:0000255" key="2"/>
<evidence type="ECO:0000255" key="3">
    <source>
        <dbReference type="PROSITE-ProRule" id="PRU00521"/>
    </source>
</evidence>
<evidence type="ECO:0000256" key="4">
    <source>
        <dbReference type="SAM" id="MobiDB-lite"/>
    </source>
</evidence>
<evidence type="ECO:0000269" key="5">
    <source>
    </source>
</evidence>
<evidence type="ECO:0000269" key="6">
    <source>
    </source>
</evidence>
<evidence type="ECO:0000269" key="7">
    <source>
    </source>
</evidence>
<evidence type="ECO:0000305" key="8"/>
<name>OPSB_MOUSE</name>
<protein>
    <recommendedName>
        <fullName>Short-wave-sensitive opsin 1</fullName>
        <shortName>S opsin</shortName>
    </recommendedName>
    <alternativeName>
        <fullName>Blue cone photoreceptor pigment</fullName>
    </alternativeName>
    <alternativeName>
        <fullName>Blue-sensitive opsin</fullName>
        <shortName>BOP</shortName>
    </alternativeName>
    <alternativeName>
        <fullName>Short wavelength-sensitive cone opsin</fullName>
    </alternativeName>
</protein>